<evidence type="ECO:0000255" key="1">
    <source>
        <dbReference type="HAMAP-Rule" id="MF_00175"/>
    </source>
</evidence>
<evidence type="ECO:0000255" key="2">
    <source>
        <dbReference type="PROSITE-ProRule" id="PRU01250"/>
    </source>
</evidence>
<accession>Q9K8F4</accession>
<keyword id="KW-0067">ATP-binding</keyword>
<keyword id="KW-0143">Chaperone</keyword>
<keyword id="KW-0479">Metal-binding</keyword>
<keyword id="KW-0547">Nucleotide-binding</keyword>
<keyword id="KW-1185">Reference proteome</keyword>
<keyword id="KW-0862">Zinc</keyword>
<sequence>MFKFNDEKGQLKCSFCGKTQDQVRKLVAGPGVYICDECIELCTEIVEEELGTEEEVEFQEVPKPHEIREILDDYVIGQDLAKKSLSVAVYNHYKRINSMSKSEEVELSKSNICMIGPTGSGKTLLAQTLARILNVPFAIADATSLTEAGYVGEDVENILLKLIQAADYDVEKAEKGIIYIDEIDKVARKSENPSITRDVSGEGVQQALLKILEGTTASVPPQGGRKHPHQEFIQIDTTNILFICGGAFDGIEQIIKRRLGKKVIGFGSEVKQDELKPGEYLSKVLPEDLLRFGLIPEFIGRLPVISSLQPLDEEALIEILTKPKNALVKQYKKLLELDDVNLEFTDEALREIARKAIERKTGARGLRSIIEGLTLDVMFDLPARDDVETCIIHDKCVTEGEPPILKMKDGSEVAMTKPEPKESA</sequence>
<proteinExistence type="inferred from homology"/>
<feature type="chain" id="PRO_0000160310" description="ATP-dependent Clp protease ATP-binding subunit ClpX">
    <location>
        <begin position="1"/>
        <end position="424"/>
    </location>
</feature>
<feature type="domain" description="ClpX-type ZB" evidence="2">
    <location>
        <begin position="1"/>
        <end position="54"/>
    </location>
</feature>
<feature type="binding site" evidence="2">
    <location>
        <position position="13"/>
    </location>
    <ligand>
        <name>Zn(2+)</name>
        <dbReference type="ChEBI" id="CHEBI:29105"/>
    </ligand>
</feature>
<feature type="binding site" evidence="2">
    <location>
        <position position="16"/>
    </location>
    <ligand>
        <name>Zn(2+)</name>
        <dbReference type="ChEBI" id="CHEBI:29105"/>
    </ligand>
</feature>
<feature type="binding site" evidence="2">
    <location>
        <position position="35"/>
    </location>
    <ligand>
        <name>Zn(2+)</name>
        <dbReference type="ChEBI" id="CHEBI:29105"/>
    </ligand>
</feature>
<feature type="binding site" evidence="2">
    <location>
        <position position="38"/>
    </location>
    <ligand>
        <name>Zn(2+)</name>
        <dbReference type="ChEBI" id="CHEBI:29105"/>
    </ligand>
</feature>
<feature type="binding site" evidence="1">
    <location>
        <begin position="117"/>
        <end position="124"/>
    </location>
    <ligand>
        <name>ATP</name>
        <dbReference type="ChEBI" id="CHEBI:30616"/>
    </ligand>
</feature>
<reference key="1">
    <citation type="journal article" date="2000" name="Nucleic Acids Res.">
        <title>Complete genome sequence of the alkaliphilic bacterium Bacillus halodurans and genomic sequence comparison with Bacillus subtilis.</title>
        <authorList>
            <person name="Takami H."/>
            <person name="Nakasone K."/>
            <person name="Takaki Y."/>
            <person name="Maeno G."/>
            <person name="Sasaki R."/>
            <person name="Masui N."/>
            <person name="Fuji F."/>
            <person name="Hirama C."/>
            <person name="Nakamura Y."/>
            <person name="Ogasawara N."/>
            <person name="Kuhara S."/>
            <person name="Horikoshi K."/>
        </authorList>
    </citation>
    <scope>NUCLEOTIDE SEQUENCE [LARGE SCALE GENOMIC DNA]</scope>
    <source>
        <strain>ATCC BAA-125 / DSM 18197 / FERM 7344 / JCM 9153 / C-125</strain>
    </source>
</reference>
<comment type="function">
    <text evidence="1">ATP-dependent specificity component of the Clp protease. It directs the protease to specific substrates. Can perform chaperone functions in the absence of ClpP.</text>
</comment>
<comment type="subunit">
    <text evidence="1">Component of the ClpX-ClpP complex. Forms a hexameric ring that, in the presence of ATP, binds to fourteen ClpP subunits assembled into a disk-like structure with a central cavity, resembling the structure of eukaryotic proteasomes.</text>
</comment>
<comment type="similarity">
    <text evidence="1">Belongs to the ClpX chaperone family.</text>
</comment>
<protein>
    <recommendedName>
        <fullName evidence="1">ATP-dependent Clp protease ATP-binding subunit ClpX</fullName>
    </recommendedName>
</protein>
<gene>
    <name evidence="1" type="primary">clpX</name>
    <name type="ordered locus">BH3052</name>
</gene>
<organism>
    <name type="scientific">Halalkalibacterium halodurans (strain ATCC BAA-125 / DSM 18197 / FERM 7344 / JCM 9153 / C-125)</name>
    <name type="common">Bacillus halodurans</name>
    <dbReference type="NCBI Taxonomy" id="272558"/>
    <lineage>
        <taxon>Bacteria</taxon>
        <taxon>Bacillati</taxon>
        <taxon>Bacillota</taxon>
        <taxon>Bacilli</taxon>
        <taxon>Bacillales</taxon>
        <taxon>Bacillaceae</taxon>
        <taxon>Halalkalibacterium (ex Joshi et al. 2022)</taxon>
    </lineage>
</organism>
<name>CLPX_HALH5</name>
<dbReference type="EMBL" id="BA000004">
    <property type="protein sequence ID" value="BAB06771.1"/>
    <property type="molecule type" value="Genomic_DNA"/>
</dbReference>
<dbReference type="PIR" id="D84031">
    <property type="entry name" value="D84031"/>
</dbReference>
<dbReference type="RefSeq" id="WP_010899196.1">
    <property type="nucleotide sequence ID" value="NC_002570.2"/>
</dbReference>
<dbReference type="SMR" id="Q9K8F4"/>
<dbReference type="STRING" id="272558.gene:10728962"/>
<dbReference type="GeneID" id="87598574"/>
<dbReference type="KEGG" id="bha:BH3052"/>
<dbReference type="eggNOG" id="COG1219">
    <property type="taxonomic scope" value="Bacteria"/>
</dbReference>
<dbReference type="HOGENOM" id="CLU_014218_8_2_9"/>
<dbReference type="OrthoDB" id="9804062at2"/>
<dbReference type="Proteomes" id="UP000001258">
    <property type="component" value="Chromosome"/>
</dbReference>
<dbReference type="GO" id="GO:0009376">
    <property type="term" value="C:HslUV protease complex"/>
    <property type="evidence" value="ECO:0007669"/>
    <property type="project" value="TreeGrafter"/>
</dbReference>
<dbReference type="GO" id="GO:0005524">
    <property type="term" value="F:ATP binding"/>
    <property type="evidence" value="ECO:0007669"/>
    <property type="project" value="UniProtKB-UniRule"/>
</dbReference>
<dbReference type="GO" id="GO:0016887">
    <property type="term" value="F:ATP hydrolysis activity"/>
    <property type="evidence" value="ECO:0007669"/>
    <property type="project" value="InterPro"/>
</dbReference>
<dbReference type="GO" id="GO:0140662">
    <property type="term" value="F:ATP-dependent protein folding chaperone"/>
    <property type="evidence" value="ECO:0007669"/>
    <property type="project" value="InterPro"/>
</dbReference>
<dbReference type="GO" id="GO:0046983">
    <property type="term" value="F:protein dimerization activity"/>
    <property type="evidence" value="ECO:0007669"/>
    <property type="project" value="InterPro"/>
</dbReference>
<dbReference type="GO" id="GO:0051082">
    <property type="term" value="F:unfolded protein binding"/>
    <property type="evidence" value="ECO:0007669"/>
    <property type="project" value="UniProtKB-UniRule"/>
</dbReference>
<dbReference type="GO" id="GO:0008270">
    <property type="term" value="F:zinc ion binding"/>
    <property type="evidence" value="ECO:0007669"/>
    <property type="project" value="InterPro"/>
</dbReference>
<dbReference type="GO" id="GO:0051301">
    <property type="term" value="P:cell division"/>
    <property type="evidence" value="ECO:0007669"/>
    <property type="project" value="TreeGrafter"/>
</dbReference>
<dbReference type="GO" id="GO:0051603">
    <property type="term" value="P:proteolysis involved in protein catabolic process"/>
    <property type="evidence" value="ECO:0007669"/>
    <property type="project" value="TreeGrafter"/>
</dbReference>
<dbReference type="CDD" id="cd19497">
    <property type="entry name" value="RecA-like_ClpX"/>
    <property type="match status" value="1"/>
</dbReference>
<dbReference type="FunFam" id="1.10.8.60:FF:000002">
    <property type="entry name" value="ATP-dependent Clp protease ATP-binding subunit ClpX"/>
    <property type="match status" value="1"/>
</dbReference>
<dbReference type="FunFam" id="3.40.50.300:FF:000005">
    <property type="entry name" value="ATP-dependent Clp protease ATP-binding subunit ClpX"/>
    <property type="match status" value="1"/>
</dbReference>
<dbReference type="Gene3D" id="1.10.8.60">
    <property type="match status" value="1"/>
</dbReference>
<dbReference type="Gene3D" id="6.20.220.10">
    <property type="entry name" value="ClpX chaperone, C4-type zinc finger domain"/>
    <property type="match status" value="1"/>
</dbReference>
<dbReference type="Gene3D" id="3.40.50.300">
    <property type="entry name" value="P-loop containing nucleotide triphosphate hydrolases"/>
    <property type="match status" value="1"/>
</dbReference>
<dbReference type="HAMAP" id="MF_00175">
    <property type="entry name" value="ClpX"/>
    <property type="match status" value="1"/>
</dbReference>
<dbReference type="InterPro" id="IPR003593">
    <property type="entry name" value="AAA+_ATPase"/>
</dbReference>
<dbReference type="InterPro" id="IPR050052">
    <property type="entry name" value="ATP-dep_Clp_protease_ClpX"/>
</dbReference>
<dbReference type="InterPro" id="IPR003959">
    <property type="entry name" value="ATPase_AAA_core"/>
</dbReference>
<dbReference type="InterPro" id="IPR019489">
    <property type="entry name" value="Clp_ATPase_C"/>
</dbReference>
<dbReference type="InterPro" id="IPR004487">
    <property type="entry name" value="Clp_protease_ATP-bd_su_ClpX"/>
</dbReference>
<dbReference type="InterPro" id="IPR046425">
    <property type="entry name" value="ClpX_bact"/>
</dbReference>
<dbReference type="InterPro" id="IPR027417">
    <property type="entry name" value="P-loop_NTPase"/>
</dbReference>
<dbReference type="InterPro" id="IPR010603">
    <property type="entry name" value="Znf_CppX_C4"/>
</dbReference>
<dbReference type="InterPro" id="IPR038366">
    <property type="entry name" value="Znf_CppX_C4_sf"/>
</dbReference>
<dbReference type="NCBIfam" id="TIGR00382">
    <property type="entry name" value="clpX"/>
    <property type="match status" value="1"/>
</dbReference>
<dbReference type="NCBIfam" id="NF003745">
    <property type="entry name" value="PRK05342.1"/>
    <property type="match status" value="1"/>
</dbReference>
<dbReference type="PANTHER" id="PTHR48102:SF7">
    <property type="entry name" value="ATP-DEPENDENT CLP PROTEASE ATP-BINDING SUBUNIT CLPX-LIKE, MITOCHONDRIAL"/>
    <property type="match status" value="1"/>
</dbReference>
<dbReference type="PANTHER" id="PTHR48102">
    <property type="entry name" value="ATP-DEPENDENT CLP PROTEASE ATP-BINDING SUBUNIT CLPX-LIKE, MITOCHONDRIAL-RELATED"/>
    <property type="match status" value="1"/>
</dbReference>
<dbReference type="Pfam" id="PF07724">
    <property type="entry name" value="AAA_2"/>
    <property type="match status" value="1"/>
</dbReference>
<dbReference type="Pfam" id="PF10431">
    <property type="entry name" value="ClpB_D2-small"/>
    <property type="match status" value="1"/>
</dbReference>
<dbReference type="Pfam" id="PF06689">
    <property type="entry name" value="zf-C4_ClpX"/>
    <property type="match status" value="1"/>
</dbReference>
<dbReference type="SMART" id="SM00382">
    <property type="entry name" value="AAA"/>
    <property type="match status" value="1"/>
</dbReference>
<dbReference type="SMART" id="SM01086">
    <property type="entry name" value="ClpB_D2-small"/>
    <property type="match status" value="1"/>
</dbReference>
<dbReference type="SMART" id="SM00994">
    <property type="entry name" value="zf-C4_ClpX"/>
    <property type="match status" value="1"/>
</dbReference>
<dbReference type="SUPFAM" id="SSF57716">
    <property type="entry name" value="Glucocorticoid receptor-like (DNA-binding domain)"/>
    <property type="match status" value="1"/>
</dbReference>
<dbReference type="SUPFAM" id="SSF52540">
    <property type="entry name" value="P-loop containing nucleoside triphosphate hydrolases"/>
    <property type="match status" value="1"/>
</dbReference>
<dbReference type="PROSITE" id="PS51902">
    <property type="entry name" value="CLPX_ZB"/>
    <property type="match status" value="1"/>
</dbReference>